<keyword id="KW-1185">Reference proteome</keyword>
<keyword id="KW-0732">Signal</keyword>
<reference key="1">
    <citation type="journal article" date="2002" name="Nucleic Acids Res.">
        <title>Genome sequence of Shigella flexneri 2a: insights into pathogenicity through comparison with genomes of Escherichia coli K12 and O157.</title>
        <authorList>
            <person name="Jin Q."/>
            <person name="Yuan Z."/>
            <person name="Xu J."/>
            <person name="Wang Y."/>
            <person name="Shen Y."/>
            <person name="Lu W."/>
            <person name="Wang J."/>
            <person name="Liu H."/>
            <person name="Yang J."/>
            <person name="Yang F."/>
            <person name="Zhang X."/>
            <person name="Zhang J."/>
            <person name="Yang G."/>
            <person name="Wu H."/>
            <person name="Qu D."/>
            <person name="Dong J."/>
            <person name="Sun L."/>
            <person name="Xue Y."/>
            <person name="Zhao A."/>
            <person name="Gao Y."/>
            <person name="Zhu J."/>
            <person name="Kan B."/>
            <person name="Ding K."/>
            <person name="Chen S."/>
            <person name="Cheng H."/>
            <person name="Yao Z."/>
            <person name="He B."/>
            <person name="Chen R."/>
            <person name="Ma D."/>
            <person name="Qiang B."/>
            <person name="Wen Y."/>
            <person name="Hou Y."/>
            <person name="Yu J."/>
        </authorList>
    </citation>
    <scope>NUCLEOTIDE SEQUENCE [LARGE SCALE GENOMIC DNA]</scope>
    <source>
        <strain>301 / Serotype 2a</strain>
    </source>
</reference>
<reference key="2">
    <citation type="journal article" date="2003" name="Infect. Immun.">
        <title>Complete genome sequence and comparative genomics of Shigella flexneri serotype 2a strain 2457T.</title>
        <authorList>
            <person name="Wei J."/>
            <person name="Goldberg M.B."/>
            <person name="Burland V."/>
            <person name="Venkatesan M.M."/>
            <person name="Deng W."/>
            <person name="Fournier G."/>
            <person name="Mayhew G.F."/>
            <person name="Plunkett G. III"/>
            <person name="Rose D.J."/>
            <person name="Darling A."/>
            <person name="Mau B."/>
            <person name="Perna N.T."/>
            <person name="Payne S.M."/>
            <person name="Runyen-Janecky L.J."/>
            <person name="Zhou S."/>
            <person name="Schwartz D.C."/>
            <person name="Blattner F.R."/>
        </authorList>
    </citation>
    <scope>NUCLEOTIDE SEQUENCE [LARGE SCALE GENOMIC DNA]</scope>
    <source>
        <strain>ATCC 700930 / 2457T / Serotype 2a</strain>
    </source>
</reference>
<name>YAAI_SHIFL</name>
<sequence>MKSVFTISASLAISLMLCCTAQANDHKLLGVIAMPRNETNDLALKLPVCRIVKRIQLSADHGDLQLSGASVYFKAARSASQSLNIPSEIKEGQTTDWININSDNDNKRCVSKITFSGHTVNSSDMATLKIIGDD</sequence>
<evidence type="ECO:0000255" key="1">
    <source>
        <dbReference type="HAMAP-Rule" id="MF_01372"/>
    </source>
</evidence>
<accession>Q83MH6</accession>
<accession>Q7C3C7</accession>
<feature type="signal peptide" evidence="1">
    <location>
        <begin position="1"/>
        <end position="23"/>
    </location>
</feature>
<feature type="chain" id="PRO_0000278591" description="UPF0412 protein YaaI">
    <location>
        <begin position="24"/>
        <end position="134"/>
    </location>
</feature>
<protein>
    <recommendedName>
        <fullName evidence="1">UPF0412 protein YaaI</fullName>
    </recommendedName>
</protein>
<dbReference type="EMBL" id="AE005674">
    <property type="protein sequence ID" value="AAN41679.1"/>
    <property type="molecule type" value="Genomic_DNA"/>
</dbReference>
<dbReference type="EMBL" id="AE014073">
    <property type="protein sequence ID" value="AAP15559.1"/>
    <property type="molecule type" value="Genomic_DNA"/>
</dbReference>
<dbReference type="RefSeq" id="NP_705972.1">
    <property type="nucleotide sequence ID" value="NC_004337.2"/>
</dbReference>
<dbReference type="RefSeq" id="WP_000843568.1">
    <property type="nucleotide sequence ID" value="NZ_WPGW01000013.1"/>
</dbReference>
<dbReference type="STRING" id="198214.SF0013"/>
<dbReference type="PaxDb" id="198214-SF0013"/>
<dbReference type="GeneID" id="1027581"/>
<dbReference type="KEGG" id="sfl:SF0013"/>
<dbReference type="KEGG" id="sfx:S0013"/>
<dbReference type="PATRIC" id="fig|198214.7.peg.12"/>
<dbReference type="HOGENOM" id="CLU_158661_0_0_6"/>
<dbReference type="Proteomes" id="UP000001006">
    <property type="component" value="Chromosome"/>
</dbReference>
<dbReference type="Proteomes" id="UP000002673">
    <property type="component" value="Chromosome"/>
</dbReference>
<dbReference type="HAMAP" id="MF_01372">
    <property type="entry name" value="UPF0412"/>
    <property type="match status" value="1"/>
</dbReference>
<dbReference type="InterPro" id="IPR020240">
    <property type="entry name" value="UPF0412_YaaI"/>
</dbReference>
<dbReference type="NCBIfam" id="NF007541">
    <property type="entry name" value="PRK10154.1"/>
    <property type="match status" value="1"/>
</dbReference>
<dbReference type="Pfam" id="PF10807">
    <property type="entry name" value="DUF2541"/>
    <property type="match status" value="1"/>
</dbReference>
<proteinExistence type="inferred from homology"/>
<comment type="similarity">
    <text evidence="1">Belongs to the UPF0412 family.</text>
</comment>
<gene>
    <name evidence="1" type="primary">yaaI</name>
    <name type="ordered locus">SF0013</name>
    <name type="ordered locus">S0013</name>
</gene>
<organism>
    <name type="scientific">Shigella flexneri</name>
    <dbReference type="NCBI Taxonomy" id="623"/>
    <lineage>
        <taxon>Bacteria</taxon>
        <taxon>Pseudomonadati</taxon>
        <taxon>Pseudomonadota</taxon>
        <taxon>Gammaproteobacteria</taxon>
        <taxon>Enterobacterales</taxon>
        <taxon>Enterobacteriaceae</taxon>
        <taxon>Shigella</taxon>
    </lineage>
</organism>